<organism>
    <name type="scientific">Aedes aegypti</name>
    <name type="common">Yellowfever mosquito</name>
    <name type="synonym">Culex aegypti</name>
    <dbReference type="NCBI Taxonomy" id="7159"/>
    <lineage>
        <taxon>Eukaryota</taxon>
        <taxon>Metazoa</taxon>
        <taxon>Ecdysozoa</taxon>
        <taxon>Arthropoda</taxon>
        <taxon>Hexapoda</taxon>
        <taxon>Insecta</taxon>
        <taxon>Pterygota</taxon>
        <taxon>Neoptera</taxon>
        <taxon>Endopterygota</taxon>
        <taxon>Diptera</taxon>
        <taxon>Nematocera</taxon>
        <taxon>Culicoidea</taxon>
        <taxon>Culicidae</taxon>
        <taxon>Culicinae</taxon>
        <taxon>Aedini</taxon>
        <taxon>Aedes</taxon>
        <taxon>Stegomyia</taxon>
    </lineage>
</organism>
<reference evidence="6 8" key="1">
    <citation type="journal article" date="2009" name="Insect Biochem. Mol. Biol.">
        <title>The insect SNMP gene family.</title>
        <authorList>
            <person name="Vogt R.G."/>
            <person name="Miller N.E."/>
            <person name="Litvack R."/>
            <person name="Fandino R.A."/>
            <person name="Sparks J."/>
            <person name="Staples J."/>
            <person name="Friedman R."/>
            <person name="Dickens J.C."/>
        </authorList>
    </citation>
    <scope>NUCLEOTIDE SEQUENCE [GENOMIC DNA / MRNA] (ISOFORM 1)</scope>
    <scope>TISSUE SPECIFICITY</scope>
</reference>
<reference key="2">
    <citation type="journal article" date="2007" name="Science">
        <title>Genome sequence of Aedes aegypti, a major arbovirus vector.</title>
        <authorList>
            <person name="Nene V."/>
            <person name="Wortman J.R."/>
            <person name="Lawson D."/>
            <person name="Haas B.J."/>
            <person name="Kodira C.D."/>
            <person name="Tu Z.J."/>
            <person name="Loftus B.J."/>
            <person name="Xi Z."/>
            <person name="Megy K."/>
            <person name="Grabherr M."/>
            <person name="Ren Q."/>
            <person name="Zdobnov E.M."/>
            <person name="Lobo N.F."/>
            <person name="Campbell K.S."/>
            <person name="Brown S.E."/>
            <person name="Bonaldo M.F."/>
            <person name="Zhu J."/>
            <person name="Sinkins S.P."/>
            <person name="Hogenkamp D.G."/>
            <person name="Amedeo P."/>
            <person name="Arensburger P."/>
            <person name="Atkinson P.W."/>
            <person name="Bidwell S.L."/>
            <person name="Biedler J."/>
            <person name="Birney E."/>
            <person name="Bruggner R.V."/>
            <person name="Costas J."/>
            <person name="Coy M.R."/>
            <person name="Crabtree J."/>
            <person name="Crawford M."/>
            <person name="DeBruyn B."/>
            <person name="DeCaprio D."/>
            <person name="Eiglmeier K."/>
            <person name="Eisenstadt E."/>
            <person name="El-Dorry H."/>
            <person name="Gelbart W.M."/>
            <person name="Gomes S.L."/>
            <person name="Hammond M."/>
            <person name="Hannick L.I."/>
            <person name="Hogan J.R."/>
            <person name="Holmes M.H."/>
            <person name="Jaffe D."/>
            <person name="Johnston S.J."/>
            <person name="Kennedy R.C."/>
            <person name="Koo H."/>
            <person name="Kravitz S."/>
            <person name="Kriventseva E.V."/>
            <person name="Kulp D."/>
            <person name="Labutti K."/>
            <person name="Lee E."/>
            <person name="Li S."/>
            <person name="Lovin D.D."/>
            <person name="Mao C."/>
            <person name="Mauceli E."/>
            <person name="Menck C.F."/>
            <person name="Miller J.R."/>
            <person name="Montgomery P."/>
            <person name="Mori A."/>
            <person name="Nascimento A.L."/>
            <person name="Naveira H.F."/>
            <person name="Nusbaum C."/>
            <person name="O'Leary S.B."/>
            <person name="Orvis J."/>
            <person name="Pertea M."/>
            <person name="Quesneville H."/>
            <person name="Reidenbach K.R."/>
            <person name="Rogers Y.-H.C."/>
            <person name="Roth C.W."/>
            <person name="Schneider J.R."/>
            <person name="Schatz M."/>
            <person name="Shumway M."/>
            <person name="Stanke M."/>
            <person name="Stinson E.O."/>
            <person name="Tubio J.M.C."/>
            <person name="Vanzee J.P."/>
            <person name="Verjovski-Almeida S."/>
            <person name="Werner D."/>
            <person name="White O.R."/>
            <person name="Wyder S."/>
            <person name="Zeng Q."/>
            <person name="Zhao Q."/>
            <person name="Zhao Y."/>
            <person name="Hill C.A."/>
            <person name="Raikhel A.S."/>
            <person name="Soares M.B."/>
            <person name="Knudson D.L."/>
            <person name="Lee N.H."/>
            <person name="Galagan J."/>
            <person name="Salzberg S.L."/>
            <person name="Paulsen I.T."/>
            <person name="Dimopoulos G."/>
            <person name="Collins F.H."/>
            <person name="Bruce B."/>
            <person name="Fraser-Liggett C.M."/>
            <person name="Severson D.W."/>
        </authorList>
    </citation>
    <scope>NUCLEOTIDE SEQUENCE [LARGE SCALE GENOMIC DNA]</scope>
    <source>
        <strain>LVPib12</strain>
    </source>
</reference>
<sequence length="542" mass="61707">MMVMNTELRQDTPQFKRWEAVPQPLDFKVYIFNVTNPYEVQMGRRPRVVEVGPYVYFQYRHKDNIRFSRDRSKVHFSQQQMYVFDAESSYPLTENDQLTVLNMHMNSILQIIDTQAKETITNFRSDVNNTLEKIPVVRVIKRIIEKTTPIQSILQLAEDETYDSLRLINAELNRIFGRPDSMFLRTTPREFLFEGVPFCVNVIGIAKAICKEIEKRNTKTIRVQPDGSMKFSFFNHKNMTNDGTYTINTGIKEPALTQMIEYWNGRNTLDRWINQSAGSSSKCNKIVGTDGSGYPPFREGVERMTIFSSDICRTVDIKYVGPSSYEGIPALRFETDSHFLNEIGPEYGNDCYCVNRIPKAIVKNNGCLYKGALDLSTCFDAPVVLTHPHMMGAAQEYTSLIDGLYPDPEKHQIFVDVEPLTGTPLNGGKRVQFNMFLRRIDSIRLTDRLQTTLFPVLWIEEGIALNEDMVKLIDDSLMKVLTLLDIVQWVMIGSGLLLAIIMPIVYFIKRRPSSGSITPTLTTTTSTVSISDGGGLGGNPQK</sequence>
<accession>C3U0S3</accession>
<accession>A8W3N6</accession>
<accession>Q177Z2</accession>
<protein>
    <recommendedName>
        <fullName evidence="5 8">Sensory neuron membrane protein 2</fullName>
        <shortName evidence="5">SNMP2Aaeg</shortName>
    </recommendedName>
</protein>
<evidence type="ECO:0000250" key="1"/>
<evidence type="ECO:0000250" key="2">
    <source>
        <dbReference type="UniProtKB" id="O02351"/>
    </source>
</evidence>
<evidence type="ECO:0000255" key="3"/>
<evidence type="ECO:0000269" key="4">
    <source>
    </source>
</evidence>
<evidence type="ECO:0000303" key="5">
    <source>
    </source>
</evidence>
<evidence type="ECO:0000305" key="6"/>
<evidence type="ECO:0000312" key="7">
    <source>
        <dbReference type="EMBL" id="ABW70128.1"/>
    </source>
</evidence>
<evidence type="ECO:0000312" key="8">
    <source>
        <dbReference type="EMBL" id="ACK99698.1"/>
    </source>
</evidence>
<feature type="chain" id="PRO_0000414926" description="Sensory neuron membrane protein 2">
    <location>
        <begin position="1"/>
        <end position="542"/>
    </location>
</feature>
<feature type="topological domain" description="Extracellular" evidence="3">
    <location>
        <begin position="1"/>
        <end position="487"/>
    </location>
</feature>
<feature type="transmembrane region" description="Helical" evidence="3">
    <location>
        <begin position="488"/>
        <end position="508"/>
    </location>
</feature>
<feature type="topological domain" description="Cytoplasmic" evidence="3">
    <location>
        <begin position="509"/>
        <end position="542"/>
    </location>
</feature>
<feature type="glycosylation site" description="N-linked (GlcNAc...) asparagine" evidence="3">
    <location>
        <position position="33"/>
    </location>
</feature>
<feature type="glycosylation site" description="N-linked (GlcNAc...) asparagine" evidence="3">
    <location>
        <position position="128"/>
    </location>
</feature>
<feature type="glycosylation site" description="N-linked (GlcNAc...) asparagine" evidence="3">
    <location>
        <position position="238"/>
    </location>
</feature>
<feature type="glycosylation site" description="N-linked (GlcNAc...) asparagine" evidence="3">
    <location>
        <position position="274"/>
    </location>
</feature>
<feature type="disulfide bond" evidence="1">
    <location>
        <begin position="283"/>
        <end position="351"/>
    </location>
</feature>
<feature type="disulfide bond" evidence="1">
    <location>
        <begin position="312"/>
        <end position="378"/>
    </location>
</feature>
<feature type="disulfide bond" evidence="1">
    <location>
        <begin position="353"/>
        <end position="367"/>
    </location>
</feature>
<feature type="splice variant" id="VSP_047868" description="In isoform 2." evidence="6">
    <location>
        <begin position="111"/>
        <end position="155"/>
    </location>
</feature>
<feature type="sequence conflict" description="In Ref. 1; ABW70128." evidence="6" ref="1">
    <original>R</original>
    <variation>C</variation>
    <location>
        <position position="60"/>
    </location>
</feature>
<feature type="sequence conflict" description="In Ref. 1; ABW70128." evidence="6" ref="1">
    <original>R</original>
    <variation>K</variation>
    <location>
        <position position="511"/>
    </location>
</feature>
<name>SNMP2_AEDAE</name>
<comment type="function">
    <text evidence="2">Plays an olfactory role that is not restricted to pheromone sensitivity.</text>
</comment>
<comment type="subcellular location">
    <subcellularLocation>
        <location evidence="6">Cell membrane</location>
        <topology evidence="6">Single-pass membrane protein</topology>
    </subcellularLocation>
</comment>
<comment type="alternative products">
    <event type="alternative splicing"/>
    <isoform>
        <id>C3U0S3-1</id>
        <name>1</name>
        <sequence type="displayed"/>
    </isoform>
    <isoform>
        <id>C3U0S3-2</id>
        <name>2</name>
        <sequence type="described" ref="VSP_047868"/>
    </isoform>
</comment>
<comment type="tissue specificity">
    <text evidence="4">Detected in the antenna, legs and wings. Higher levels of expression detected in male compared to female.</text>
</comment>
<comment type="similarity">
    <text evidence="3">Belongs to the CD36 family.</text>
</comment>
<gene>
    <name evidence="7" type="primary">snmp2</name>
    <name type="synonym">SCRB16</name>
    <name type="ORF">AAEL005981</name>
</gene>
<keyword id="KW-0025">Alternative splicing</keyword>
<keyword id="KW-1003">Cell membrane</keyword>
<keyword id="KW-1015">Disulfide bond</keyword>
<keyword id="KW-0325">Glycoprotein</keyword>
<keyword id="KW-0472">Membrane</keyword>
<keyword id="KW-0552">Olfaction</keyword>
<keyword id="KW-0675">Receptor</keyword>
<keyword id="KW-1185">Reference proteome</keyword>
<keyword id="KW-0716">Sensory transduction</keyword>
<keyword id="KW-0812">Transmembrane</keyword>
<keyword id="KW-1133">Transmembrane helix</keyword>
<proteinExistence type="evidence at transcript level"/>
<dbReference type="EMBL" id="EU189151">
    <property type="protein sequence ID" value="ABW70128.1"/>
    <property type="molecule type" value="mRNA"/>
</dbReference>
<dbReference type="EMBL" id="FJ387159">
    <property type="protein sequence ID" value="ACK99698.1"/>
    <property type="molecule type" value="Genomic_DNA"/>
</dbReference>
<dbReference type="EMBL" id="CH477368">
    <property type="protein sequence ID" value="EAT42492.2"/>
    <property type="molecule type" value="Genomic_DNA"/>
</dbReference>
<dbReference type="RefSeq" id="XP_001664331.2">
    <property type="nucleotide sequence ID" value="XM_001664281.2"/>
</dbReference>
<dbReference type="SMR" id="C3U0S3"/>
<dbReference type="FunCoup" id="C3U0S3">
    <property type="interactions" value="4"/>
</dbReference>
<dbReference type="STRING" id="7159.C3U0S3"/>
<dbReference type="GlyCosmos" id="C3U0S3">
    <property type="glycosylation" value="4 sites, No reported glycans"/>
</dbReference>
<dbReference type="PaxDb" id="7159-AAEL005981-PA"/>
<dbReference type="VEuPathDB" id="VectorBase:AAEL019436"/>
<dbReference type="eggNOG" id="KOG3776">
    <property type="taxonomic scope" value="Eukaryota"/>
</dbReference>
<dbReference type="InParanoid" id="C3U0S3"/>
<dbReference type="Proteomes" id="UP000008820">
    <property type="component" value="Chromosome 2"/>
</dbReference>
<dbReference type="Proteomes" id="UP000682892">
    <property type="component" value="Unassembled WGS sequence"/>
</dbReference>
<dbReference type="GO" id="GO:0005737">
    <property type="term" value="C:cytoplasm"/>
    <property type="evidence" value="ECO:0007669"/>
    <property type="project" value="TreeGrafter"/>
</dbReference>
<dbReference type="GO" id="GO:0005886">
    <property type="term" value="C:plasma membrane"/>
    <property type="evidence" value="ECO:0007669"/>
    <property type="project" value="UniProtKB-SubCell"/>
</dbReference>
<dbReference type="GO" id="GO:0005044">
    <property type="term" value="F:scavenger receptor activity"/>
    <property type="evidence" value="ECO:0007669"/>
    <property type="project" value="TreeGrafter"/>
</dbReference>
<dbReference type="GO" id="GO:0007608">
    <property type="term" value="P:sensory perception of smell"/>
    <property type="evidence" value="ECO:0007669"/>
    <property type="project" value="UniProtKB-KW"/>
</dbReference>
<dbReference type="InterPro" id="IPR002159">
    <property type="entry name" value="CD36_fam"/>
</dbReference>
<dbReference type="PANTHER" id="PTHR11923">
    <property type="entry name" value="SCAVENGER RECEPTOR CLASS B TYPE-1 SR-B1"/>
    <property type="match status" value="1"/>
</dbReference>
<dbReference type="PANTHER" id="PTHR11923:SF109">
    <property type="entry name" value="SENSORY NEURON MEMBRANE PROTEIN 2"/>
    <property type="match status" value="1"/>
</dbReference>
<dbReference type="Pfam" id="PF01130">
    <property type="entry name" value="CD36"/>
    <property type="match status" value="1"/>
</dbReference>
<dbReference type="PRINTS" id="PR01609">
    <property type="entry name" value="CD36FAMILY"/>
</dbReference>